<accession>Q6PG34</accession>
<sequence>MMALVCDTAVDDIEDMVRITDVTPLQRQAARKSVVPRARKHKQETGEQMQTDSVIPGMQKVWLKTWGCSHNSSDGEYMAGQLAVAGYQITEDSSDADLWLLNSCTVKSPAEDHFRNAIRKAQEQNKKVVLAGCVPQAQPRMDYIKDLSIIGVQQIDRVVEVVDEAIKGHSVRLLGQKKEKGKRLGGARLDLPKIRKNPLIEIISINTGCLNACTYCKTKHARGDLASYPVEELVERVRQSFQEGVCEIWLTSEDTGAYGRDIGSDLPTLLWRLVEEIPEGAMLRLGMTNPPYILEHLEEMSRILQHPRVFSFLHVPLQSASDSVLMEMRREYCCADFTHLVDYLKERVPGITIATDIICGFPGETDEDFEQTLALVRRYRFPSLFINQFYPRPGTPAALMQQLPAHVKKQRTKELSALFHSYRPYDHKMGEQQQVLVTEESFDSQYYVAHNKFYEQVLVPKRPEYLGKMVQVEVYECGKHYMKGRPLEEAPLRTAYTTAPLLKGQVSGHTQAGVCEPQCWMPDGMRILAVVLLLSAVLLALLMEKLL</sequence>
<gene>
    <name type="primary">cdkal1</name>
    <name type="ORF">zgc:65864</name>
</gene>
<protein>
    <recommendedName>
        <fullName>Threonylcarbamoyladenosine tRNA methylthiotransferase</fullName>
        <ecNumber evidence="2">2.8.4.5</ecNumber>
    </recommendedName>
    <alternativeName>
        <fullName>CDK5 regulatory subunit-associated protein 1-like 1</fullName>
    </alternativeName>
    <alternativeName>
        <fullName>tRNA-t(6)A37 methylthiotransferase</fullName>
    </alternativeName>
</protein>
<organism>
    <name type="scientific">Danio rerio</name>
    <name type="common">Zebrafish</name>
    <name type="synonym">Brachydanio rerio</name>
    <dbReference type="NCBI Taxonomy" id="7955"/>
    <lineage>
        <taxon>Eukaryota</taxon>
        <taxon>Metazoa</taxon>
        <taxon>Chordata</taxon>
        <taxon>Craniata</taxon>
        <taxon>Vertebrata</taxon>
        <taxon>Euteleostomi</taxon>
        <taxon>Actinopterygii</taxon>
        <taxon>Neopterygii</taxon>
        <taxon>Teleostei</taxon>
        <taxon>Ostariophysi</taxon>
        <taxon>Cypriniformes</taxon>
        <taxon>Danionidae</taxon>
        <taxon>Danioninae</taxon>
        <taxon>Danio</taxon>
    </lineage>
</organism>
<name>CDKAL_DANRE</name>
<keyword id="KW-0004">4Fe-4S</keyword>
<keyword id="KW-0256">Endoplasmic reticulum</keyword>
<keyword id="KW-0408">Iron</keyword>
<keyword id="KW-0411">Iron-sulfur</keyword>
<keyword id="KW-0472">Membrane</keyword>
<keyword id="KW-0479">Metal-binding</keyword>
<keyword id="KW-1185">Reference proteome</keyword>
<keyword id="KW-0949">S-adenosyl-L-methionine</keyword>
<keyword id="KW-0808">Transferase</keyword>
<keyword id="KW-0812">Transmembrane</keyword>
<keyword id="KW-1133">Transmembrane helix</keyword>
<keyword id="KW-0819">tRNA processing</keyword>
<evidence type="ECO:0000250" key="1">
    <source>
        <dbReference type="UniProtKB" id="Q5VV42"/>
    </source>
</evidence>
<evidence type="ECO:0000250" key="2">
    <source>
        <dbReference type="UniProtKB" id="Q91WE6"/>
    </source>
</evidence>
<evidence type="ECO:0000255" key="3"/>
<evidence type="ECO:0000255" key="4">
    <source>
        <dbReference type="PROSITE-ProRule" id="PRU00208"/>
    </source>
</evidence>
<evidence type="ECO:0000255" key="5">
    <source>
        <dbReference type="PROSITE-ProRule" id="PRU00780"/>
    </source>
</evidence>
<evidence type="ECO:0000255" key="6">
    <source>
        <dbReference type="PROSITE-ProRule" id="PRU01266"/>
    </source>
</evidence>
<evidence type="ECO:0000256" key="7">
    <source>
        <dbReference type="SAM" id="MobiDB-lite"/>
    </source>
</evidence>
<evidence type="ECO:0000305" key="8"/>
<dbReference type="EC" id="2.8.4.5" evidence="2"/>
<dbReference type="EMBL" id="BC057248">
    <property type="protein sequence ID" value="AAH57248.1"/>
    <property type="molecule type" value="mRNA"/>
</dbReference>
<dbReference type="RefSeq" id="NP_956921.1">
    <property type="nucleotide sequence ID" value="NM_200627.1"/>
</dbReference>
<dbReference type="SMR" id="Q6PG34"/>
<dbReference type="BioGRID" id="89730">
    <property type="interactions" value="1"/>
</dbReference>
<dbReference type="FunCoup" id="Q6PG34">
    <property type="interactions" value="1387"/>
</dbReference>
<dbReference type="STRING" id="7955.ENSDARP00000133296"/>
<dbReference type="PaxDb" id="7955-ENSDARP00000031816"/>
<dbReference type="GeneID" id="393600"/>
<dbReference type="KEGG" id="dre:393600"/>
<dbReference type="AGR" id="ZFIN:ZDB-GENE-040426-1443"/>
<dbReference type="CTD" id="54901"/>
<dbReference type="ZFIN" id="ZDB-GENE-040426-1443">
    <property type="gene designation" value="cdkal1"/>
</dbReference>
<dbReference type="eggNOG" id="KOG4355">
    <property type="taxonomic scope" value="Eukaryota"/>
</dbReference>
<dbReference type="InParanoid" id="Q6PG34"/>
<dbReference type="OrthoDB" id="1730074at2759"/>
<dbReference type="PhylomeDB" id="Q6PG34"/>
<dbReference type="PRO" id="PR:Q6PG34"/>
<dbReference type="Proteomes" id="UP000000437">
    <property type="component" value="Chromosome 16"/>
</dbReference>
<dbReference type="GO" id="GO:0005783">
    <property type="term" value="C:endoplasmic reticulum"/>
    <property type="evidence" value="ECO:0000318"/>
    <property type="project" value="GO_Central"/>
</dbReference>
<dbReference type="GO" id="GO:0005789">
    <property type="term" value="C:endoplasmic reticulum membrane"/>
    <property type="evidence" value="ECO:0007669"/>
    <property type="project" value="UniProtKB-SubCell"/>
</dbReference>
<dbReference type="GO" id="GO:0051539">
    <property type="term" value="F:4 iron, 4 sulfur cluster binding"/>
    <property type="evidence" value="ECO:0007669"/>
    <property type="project" value="UniProtKB-KW"/>
</dbReference>
<dbReference type="GO" id="GO:0046872">
    <property type="term" value="F:metal ion binding"/>
    <property type="evidence" value="ECO:0007669"/>
    <property type="project" value="UniProtKB-KW"/>
</dbReference>
<dbReference type="GO" id="GO:0035598">
    <property type="term" value="F:N6-threonylcarbomyladenosine methylthiotransferase activity"/>
    <property type="evidence" value="ECO:0000318"/>
    <property type="project" value="GO_Central"/>
</dbReference>
<dbReference type="GO" id="GO:0061712">
    <property type="term" value="F:tRNA (N(6)-L-threonylcarbamoyladenosine(37)-C(2))-methylthiotransferase"/>
    <property type="evidence" value="ECO:0007669"/>
    <property type="project" value="UniProtKB-EC"/>
</dbReference>
<dbReference type="GO" id="GO:0031018">
    <property type="term" value="P:endocrine pancreas development"/>
    <property type="evidence" value="ECO:0000315"/>
    <property type="project" value="ZFIN"/>
</dbReference>
<dbReference type="GO" id="GO:1990798">
    <property type="term" value="P:pancreas regeneration"/>
    <property type="evidence" value="ECO:0000315"/>
    <property type="project" value="ZFIN"/>
</dbReference>
<dbReference type="GO" id="GO:0035600">
    <property type="term" value="P:tRNA methylthiolation"/>
    <property type="evidence" value="ECO:0000318"/>
    <property type="project" value="GO_Central"/>
</dbReference>
<dbReference type="GO" id="GO:0003323">
    <property type="term" value="P:type B pancreatic cell development"/>
    <property type="evidence" value="ECO:0000315"/>
    <property type="project" value="ZFIN"/>
</dbReference>
<dbReference type="CDD" id="cd01335">
    <property type="entry name" value="Radical_SAM"/>
    <property type="match status" value="1"/>
</dbReference>
<dbReference type="FunFam" id="3.40.50.12160:FF:000005">
    <property type="entry name" value="threonylcarbamoyladenosine tRNA methylthiotransferase isoform X1"/>
    <property type="match status" value="1"/>
</dbReference>
<dbReference type="FunFam" id="3.80.30.20:FF:000002">
    <property type="entry name" value="threonylcarbamoyladenosine tRNA methylthiotransferase isoform X2"/>
    <property type="match status" value="1"/>
</dbReference>
<dbReference type="Gene3D" id="3.40.50.12160">
    <property type="entry name" value="Methylthiotransferase, N-terminal domain"/>
    <property type="match status" value="1"/>
</dbReference>
<dbReference type="Gene3D" id="3.80.30.20">
    <property type="entry name" value="tm_1862 like domain"/>
    <property type="match status" value="1"/>
</dbReference>
<dbReference type="InterPro" id="IPR006638">
    <property type="entry name" value="Elp3/MiaA/NifB-like_rSAM"/>
</dbReference>
<dbReference type="InterPro" id="IPR005839">
    <property type="entry name" value="Methylthiotransferase"/>
</dbReference>
<dbReference type="InterPro" id="IPR020612">
    <property type="entry name" value="Methylthiotransferase_CS"/>
</dbReference>
<dbReference type="InterPro" id="IPR013848">
    <property type="entry name" value="Methylthiotransferase_N"/>
</dbReference>
<dbReference type="InterPro" id="IPR038135">
    <property type="entry name" value="Methylthiotransferase_N_sf"/>
</dbReference>
<dbReference type="InterPro" id="IPR006466">
    <property type="entry name" value="MiaB-like_arc_euk"/>
</dbReference>
<dbReference type="InterPro" id="IPR007197">
    <property type="entry name" value="rSAM"/>
</dbReference>
<dbReference type="InterPro" id="IPR023404">
    <property type="entry name" value="rSAM_horseshoe"/>
</dbReference>
<dbReference type="InterPro" id="IPR002792">
    <property type="entry name" value="TRAM_dom"/>
</dbReference>
<dbReference type="NCBIfam" id="TIGR01578">
    <property type="entry name" value="MiaB-like-B"/>
    <property type="match status" value="1"/>
</dbReference>
<dbReference type="NCBIfam" id="TIGR00089">
    <property type="entry name" value="MiaB/RimO family radical SAM methylthiotransferase"/>
    <property type="match status" value="1"/>
</dbReference>
<dbReference type="PANTHER" id="PTHR11918">
    <property type="entry name" value="RADICAL SAM PROTEINS"/>
    <property type="match status" value="1"/>
</dbReference>
<dbReference type="PANTHER" id="PTHR11918:SF45">
    <property type="entry name" value="THREONYLCARBAMOYLADENOSINE TRNA METHYLTHIOTRANSFERASE"/>
    <property type="match status" value="1"/>
</dbReference>
<dbReference type="Pfam" id="PF04055">
    <property type="entry name" value="Radical_SAM"/>
    <property type="match status" value="1"/>
</dbReference>
<dbReference type="Pfam" id="PF00919">
    <property type="entry name" value="UPF0004"/>
    <property type="match status" value="1"/>
</dbReference>
<dbReference type="SFLD" id="SFLDG01082">
    <property type="entry name" value="B12-binding_domain_containing"/>
    <property type="match status" value="1"/>
</dbReference>
<dbReference type="SFLD" id="SFLDG01061">
    <property type="entry name" value="methylthiotransferase"/>
    <property type="match status" value="1"/>
</dbReference>
<dbReference type="SFLD" id="SFLDS00029">
    <property type="entry name" value="Radical_SAM"/>
    <property type="match status" value="1"/>
</dbReference>
<dbReference type="SMART" id="SM00729">
    <property type="entry name" value="Elp3"/>
    <property type="match status" value="1"/>
</dbReference>
<dbReference type="SUPFAM" id="SSF102114">
    <property type="entry name" value="Radical SAM enzymes"/>
    <property type="match status" value="1"/>
</dbReference>
<dbReference type="PROSITE" id="PS51449">
    <property type="entry name" value="MTTASE_N"/>
    <property type="match status" value="1"/>
</dbReference>
<dbReference type="PROSITE" id="PS01278">
    <property type="entry name" value="MTTASE_RADICAL"/>
    <property type="match status" value="1"/>
</dbReference>
<dbReference type="PROSITE" id="PS51918">
    <property type="entry name" value="RADICAL_SAM"/>
    <property type="match status" value="1"/>
</dbReference>
<dbReference type="PROSITE" id="PS50926">
    <property type="entry name" value="TRAM"/>
    <property type="match status" value="1"/>
</dbReference>
<reference key="1">
    <citation type="submission" date="2003-08" db="EMBL/GenBank/DDBJ databases">
        <authorList>
            <consortium name="NIH - Zebrafish Gene Collection (ZGC) project"/>
        </authorList>
    </citation>
    <scope>NUCLEOTIDE SEQUENCE [LARGE SCALE MRNA]</scope>
    <source>
        <tissue>Embryo</tissue>
    </source>
</reference>
<comment type="function">
    <text evidence="2">Catalyzes the methylthiolation of N6-threonylcarbamoyladenosine (t(6)A), leading to the formation of 2-methylthio-N6-threonylcarbamoyladenosine (ms(2)t(6)A) at position 37 in tRNAs that read codons beginning with adenine.</text>
</comment>
<comment type="catalytic activity">
    <reaction evidence="2">
        <text>N(6)-L-threonylcarbamoyladenosine(37) in tRNA + (sulfur carrier)-SH + AH2 + 2 S-adenosyl-L-methionine = 2-methylsulfanyl-N(6)-L-threonylcarbamoyladenosine(37) in tRNA + (sulfur carrier)-H + 5'-deoxyadenosine + L-methionine + A + S-adenosyl-L-homocysteine + 2 H(+)</text>
        <dbReference type="Rhea" id="RHEA:37075"/>
        <dbReference type="Rhea" id="RHEA-COMP:10163"/>
        <dbReference type="Rhea" id="RHEA-COMP:11092"/>
        <dbReference type="Rhea" id="RHEA-COMP:14737"/>
        <dbReference type="Rhea" id="RHEA-COMP:14739"/>
        <dbReference type="ChEBI" id="CHEBI:13193"/>
        <dbReference type="ChEBI" id="CHEBI:15378"/>
        <dbReference type="ChEBI" id="CHEBI:17319"/>
        <dbReference type="ChEBI" id="CHEBI:17499"/>
        <dbReference type="ChEBI" id="CHEBI:29917"/>
        <dbReference type="ChEBI" id="CHEBI:57844"/>
        <dbReference type="ChEBI" id="CHEBI:57856"/>
        <dbReference type="ChEBI" id="CHEBI:59789"/>
        <dbReference type="ChEBI" id="CHEBI:64428"/>
        <dbReference type="ChEBI" id="CHEBI:74418"/>
        <dbReference type="ChEBI" id="CHEBI:74420"/>
        <dbReference type="EC" id="2.8.4.5"/>
    </reaction>
</comment>
<comment type="cofactor">
    <cofactor evidence="5">
        <name>[4Fe-4S] cluster</name>
        <dbReference type="ChEBI" id="CHEBI:49883"/>
    </cofactor>
    <text evidence="5">Binds 2 [4Fe-4S] clusters. One cluster is coordinated with 3 cysteines and an exchangeable S-adenosyl-L-methionine.</text>
</comment>
<comment type="subcellular location">
    <subcellularLocation>
        <location evidence="1">Endoplasmic reticulum membrane</location>
        <topology evidence="3">Single-pass membrane protein</topology>
    </subcellularLocation>
</comment>
<comment type="similarity">
    <text evidence="8">Belongs to the methylthiotransferase family. CDKAL1 subfamily.</text>
</comment>
<feature type="chain" id="PRO_0000298672" description="Threonylcarbamoyladenosine tRNA methylthiotransferase">
    <location>
        <begin position="1"/>
        <end position="547"/>
    </location>
</feature>
<feature type="transmembrane region" description="Helical" evidence="3">
    <location>
        <begin position="527"/>
        <end position="547"/>
    </location>
</feature>
<feature type="domain" description="MTTase N-terminal" evidence="5">
    <location>
        <begin position="59"/>
        <end position="167"/>
    </location>
</feature>
<feature type="domain" description="Radical SAM core" evidence="6">
    <location>
        <begin position="195"/>
        <end position="426"/>
    </location>
</feature>
<feature type="domain" description="TRAM" evidence="4">
    <location>
        <begin position="426"/>
        <end position="488"/>
    </location>
</feature>
<feature type="region of interest" description="Disordered" evidence="7">
    <location>
        <begin position="30"/>
        <end position="51"/>
    </location>
</feature>
<feature type="binding site" evidence="5">
    <location>
        <position position="68"/>
    </location>
    <ligand>
        <name>[4Fe-4S] cluster</name>
        <dbReference type="ChEBI" id="CHEBI:49883"/>
        <label>1</label>
    </ligand>
</feature>
<feature type="binding site" evidence="5">
    <location>
        <position position="104"/>
    </location>
    <ligand>
        <name>[4Fe-4S] cluster</name>
        <dbReference type="ChEBI" id="CHEBI:49883"/>
        <label>1</label>
    </ligand>
</feature>
<feature type="binding site" evidence="5">
    <location>
        <position position="133"/>
    </location>
    <ligand>
        <name>[4Fe-4S] cluster</name>
        <dbReference type="ChEBI" id="CHEBI:49883"/>
        <label>1</label>
    </ligand>
</feature>
<feature type="binding site" evidence="5">
    <location>
        <position position="209"/>
    </location>
    <ligand>
        <name>[4Fe-4S] cluster</name>
        <dbReference type="ChEBI" id="CHEBI:49883"/>
        <label>2</label>
        <note>4Fe-4S-S-AdoMet</note>
    </ligand>
</feature>
<feature type="binding site" evidence="5">
    <location>
        <position position="213"/>
    </location>
    <ligand>
        <name>[4Fe-4S] cluster</name>
        <dbReference type="ChEBI" id="CHEBI:49883"/>
        <label>2</label>
        <note>4Fe-4S-S-AdoMet</note>
    </ligand>
</feature>
<feature type="binding site" evidence="5">
    <location>
        <position position="216"/>
    </location>
    <ligand>
        <name>[4Fe-4S] cluster</name>
        <dbReference type="ChEBI" id="CHEBI:49883"/>
        <label>2</label>
        <note>4Fe-4S-S-AdoMet</note>
    </ligand>
</feature>
<proteinExistence type="evidence at transcript level"/>